<gene>
    <name evidence="1" type="primary">lolB</name>
    <name type="ordered locus">ETA_18810</name>
</gene>
<dbReference type="EMBL" id="CU468135">
    <property type="protein sequence ID" value="CAO96927.1"/>
    <property type="molecule type" value="Genomic_DNA"/>
</dbReference>
<dbReference type="RefSeq" id="WP_012441611.1">
    <property type="nucleotide sequence ID" value="NC_010694.1"/>
</dbReference>
<dbReference type="SMR" id="B2VEI1"/>
<dbReference type="STRING" id="465817.ETA_18810"/>
<dbReference type="KEGG" id="eta:ETA_18810"/>
<dbReference type="eggNOG" id="COG3017">
    <property type="taxonomic scope" value="Bacteria"/>
</dbReference>
<dbReference type="HOGENOM" id="CLU_092816_1_1_6"/>
<dbReference type="OrthoDB" id="9797618at2"/>
<dbReference type="Proteomes" id="UP000001726">
    <property type="component" value="Chromosome"/>
</dbReference>
<dbReference type="GO" id="GO:0009279">
    <property type="term" value="C:cell outer membrane"/>
    <property type="evidence" value="ECO:0007669"/>
    <property type="project" value="UniProtKB-SubCell"/>
</dbReference>
<dbReference type="GO" id="GO:0044874">
    <property type="term" value="P:lipoprotein localization to outer membrane"/>
    <property type="evidence" value="ECO:0007669"/>
    <property type="project" value="UniProtKB-UniRule"/>
</dbReference>
<dbReference type="GO" id="GO:0015031">
    <property type="term" value="P:protein transport"/>
    <property type="evidence" value="ECO:0007669"/>
    <property type="project" value="UniProtKB-KW"/>
</dbReference>
<dbReference type="CDD" id="cd16326">
    <property type="entry name" value="LolB"/>
    <property type="match status" value="1"/>
</dbReference>
<dbReference type="Gene3D" id="2.50.20.10">
    <property type="entry name" value="Lipoprotein localisation LolA/LolB/LppX"/>
    <property type="match status" value="1"/>
</dbReference>
<dbReference type="HAMAP" id="MF_00233">
    <property type="entry name" value="LolB"/>
    <property type="match status" value="1"/>
</dbReference>
<dbReference type="InterPro" id="IPR029046">
    <property type="entry name" value="LolA/LolB/LppX"/>
</dbReference>
<dbReference type="InterPro" id="IPR004565">
    <property type="entry name" value="OM_lipoprot_LolB"/>
</dbReference>
<dbReference type="NCBIfam" id="TIGR00548">
    <property type="entry name" value="lolB"/>
    <property type="match status" value="1"/>
</dbReference>
<dbReference type="Pfam" id="PF03550">
    <property type="entry name" value="LolB"/>
    <property type="match status" value="1"/>
</dbReference>
<dbReference type="SUPFAM" id="SSF89392">
    <property type="entry name" value="Prokaryotic lipoproteins and lipoprotein localization factors"/>
    <property type="match status" value="1"/>
</dbReference>
<dbReference type="PROSITE" id="PS51257">
    <property type="entry name" value="PROKAR_LIPOPROTEIN"/>
    <property type="match status" value="1"/>
</dbReference>
<comment type="function">
    <text evidence="1">Plays a critical role in the incorporation of lipoproteins in the outer membrane after they are released by the LolA protein.</text>
</comment>
<comment type="subunit">
    <text evidence="1">Monomer.</text>
</comment>
<comment type="subcellular location">
    <subcellularLocation>
        <location evidence="1">Cell outer membrane</location>
        <topology evidence="1">Lipid-anchor</topology>
    </subcellularLocation>
</comment>
<comment type="similarity">
    <text evidence="1">Belongs to the LolB family.</text>
</comment>
<proteinExistence type="inferred from homology"/>
<reference key="1">
    <citation type="journal article" date="2008" name="Environ. Microbiol.">
        <title>The genome of Erwinia tasmaniensis strain Et1/99, a non-pathogenic bacterium in the genus Erwinia.</title>
        <authorList>
            <person name="Kube M."/>
            <person name="Migdoll A.M."/>
            <person name="Mueller I."/>
            <person name="Kuhl H."/>
            <person name="Beck A."/>
            <person name="Reinhardt R."/>
            <person name="Geider K."/>
        </authorList>
    </citation>
    <scope>NUCLEOTIDE SEQUENCE [LARGE SCALE GENOMIC DNA]</scope>
    <source>
        <strain>DSM 17950 / CFBP 7177 / CIP 109463 / NCPPB 4357 / Et1/99</strain>
    </source>
</reference>
<evidence type="ECO:0000255" key="1">
    <source>
        <dbReference type="HAMAP-Rule" id="MF_00233"/>
    </source>
</evidence>
<keyword id="KW-0998">Cell outer membrane</keyword>
<keyword id="KW-0143">Chaperone</keyword>
<keyword id="KW-0449">Lipoprotein</keyword>
<keyword id="KW-0472">Membrane</keyword>
<keyword id="KW-0564">Palmitate</keyword>
<keyword id="KW-0653">Protein transport</keyword>
<keyword id="KW-1185">Reference proteome</keyword>
<keyword id="KW-0732">Signal</keyword>
<keyword id="KW-0813">Transport</keyword>
<accession>B2VEI1</accession>
<feature type="signal peptide" evidence="1">
    <location>
        <begin position="1"/>
        <end position="21"/>
    </location>
</feature>
<feature type="chain" id="PRO_1000100498" description="Outer-membrane lipoprotein LolB">
    <location>
        <begin position="22"/>
        <end position="208"/>
    </location>
</feature>
<feature type="lipid moiety-binding region" description="N-palmitoyl cysteine" evidence="1">
    <location>
        <position position="22"/>
    </location>
</feature>
<feature type="lipid moiety-binding region" description="S-diacylglycerol cysteine" evidence="1">
    <location>
        <position position="22"/>
    </location>
</feature>
<name>LOLB_ERWT9</name>
<protein>
    <recommendedName>
        <fullName evidence="1">Outer-membrane lipoprotein LolB</fullName>
    </recommendedName>
</protein>
<organism>
    <name type="scientific">Erwinia tasmaniensis (strain DSM 17950 / CFBP 7177 / CIP 109463 / NCPPB 4357 / Et1/99)</name>
    <dbReference type="NCBI Taxonomy" id="465817"/>
    <lineage>
        <taxon>Bacteria</taxon>
        <taxon>Pseudomonadati</taxon>
        <taxon>Pseudomonadota</taxon>
        <taxon>Gammaproteobacteria</taxon>
        <taxon>Enterobacterales</taxon>
        <taxon>Erwiniaceae</taxon>
        <taxon>Erwinia</taxon>
    </lineage>
</organism>
<sequence length="208" mass="24177">MLSSKRRLMRLLPLASLLLTACGLHTQPQNPGQSPTSLQWHQHQQAVEKITHYQTRGAFAWLSERQKVYARFNWQQSAPDRYRLLLTNPLGSTELQLDQQGQVAQIVDNKGKRYVSNDAAQMISQLTGMTIPLSNLRQWMMGLPGEATDYQLDDQYRLREVNFSEEGKRWHVTYLDYHTEQNPQLPANIELQQGDQRIKLKMDSWTIK</sequence>